<organism>
    <name type="scientific">Schizosaccharomyces pombe (strain 972 / ATCC 24843)</name>
    <name type="common">Fission yeast</name>
    <dbReference type="NCBI Taxonomy" id="284812"/>
    <lineage>
        <taxon>Eukaryota</taxon>
        <taxon>Fungi</taxon>
        <taxon>Dikarya</taxon>
        <taxon>Ascomycota</taxon>
        <taxon>Taphrinomycotina</taxon>
        <taxon>Schizosaccharomycetes</taxon>
        <taxon>Schizosaccharomycetales</taxon>
        <taxon>Schizosaccharomycetaceae</taxon>
        <taxon>Schizosaccharomyces</taxon>
    </lineage>
</organism>
<keyword id="KW-0067">ATP-binding</keyword>
<keyword id="KW-0418">Kinase</keyword>
<keyword id="KW-0547">Nucleotide-binding</keyword>
<keyword id="KW-0597">Phosphoprotein</keyword>
<keyword id="KW-1185">Reference proteome</keyword>
<keyword id="KW-0723">Serine/threonine-protein kinase</keyword>
<keyword id="KW-0808">Transferase</keyword>
<evidence type="ECO:0000255" key="1">
    <source>
        <dbReference type="PROSITE-ProRule" id="PRU00159"/>
    </source>
</evidence>
<evidence type="ECO:0000255" key="2">
    <source>
        <dbReference type="PROSITE-ProRule" id="PRU10027"/>
    </source>
</evidence>
<evidence type="ECO:0000269" key="3">
    <source>
    </source>
</evidence>
<evidence type="ECO:0000305" key="4"/>
<reference key="1">
    <citation type="journal article" date="1997" name="DNA Res.">
        <title>Identification of open reading frames in Schizosaccharomyces pombe cDNAs.</title>
        <authorList>
            <person name="Yoshioka S."/>
            <person name="Kato K."/>
            <person name="Nakai K."/>
            <person name="Okayama H."/>
            <person name="Nojima H."/>
        </authorList>
    </citation>
    <scope>NUCLEOTIDE SEQUENCE [LARGE SCALE MRNA]</scope>
    <source>
        <strain>PR745</strain>
    </source>
</reference>
<reference key="2">
    <citation type="journal article" date="2000" name="Yeast">
        <title>A 38 kb segment containing the cdc2 gene from the left arm of fission yeast chromosome II: sequence analysis and characterization of the genomic DNA and cDNAs encoded on the segment.</title>
        <authorList>
            <person name="Machida M."/>
            <person name="Yamazaki S."/>
            <person name="Kunihiro S."/>
            <person name="Tanaka T."/>
            <person name="Kushida N."/>
            <person name="Jinno K."/>
            <person name="Haikawa Y."/>
            <person name="Yamazaki J."/>
            <person name="Yamamoto S."/>
            <person name="Sekine M."/>
            <person name="Oguchi A."/>
            <person name="Nagai Y."/>
            <person name="Sakai M."/>
            <person name="Aoki K."/>
            <person name="Ogura K."/>
            <person name="Kudoh Y."/>
            <person name="Kikuchi H."/>
            <person name="Zhang M.Q."/>
            <person name="Yanagida M."/>
        </authorList>
    </citation>
    <scope>NUCLEOTIDE SEQUENCE [LARGE SCALE GENOMIC DNA]</scope>
    <source>
        <strain>972 / ATCC 24843</strain>
    </source>
</reference>
<reference key="3">
    <citation type="journal article" date="2002" name="Nature">
        <title>The genome sequence of Schizosaccharomyces pombe.</title>
        <authorList>
            <person name="Wood V."/>
            <person name="Gwilliam R."/>
            <person name="Rajandream M.A."/>
            <person name="Lyne M.H."/>
            <person name="Lyne R."/>
            <person name="Stewart A."/>
            <person name="Sgouros J.G."/>
            <person name="Peat N."/>
            <person name="Hayles J."/>
            <person name="Baker S.G."/>
            <person name="Basham D."/>
            <person name="Bowman S."/>
            <person name="Brooks K."/>
            <person name="Brown D."/>
            <person name="Brown S."/>
            <person name="Chillingworth T."/>
            <person name="Churcher C.M."/>
            <person name="Collins M."/>
            <person name="Connor R."/>
            <person name="Cronin A."/>
            <person name="Davis P."/>
            <person name="Feltwell T."/>
            <person name="Fraser A."/>
            <person name="Gentles S."/>
            <person name="Goble A."/>
            <person name="Hamlin N."/>
            <person name="Harris D.E."/>
            <person name="Hidalgo J."/>
            <person name="Hodgson G."/>
            <person name="Holroyd S."/>
            <person name="Hornsby T."/>
            <person name="Howarth S."/>
            <person name="Huckle E.J."/>
            <person name="Hunt S."/>
            <person name="Jagels K."/>
            <person name="James K.D."/>
            <person name="Jones L."/>
            <person name="Jones M."/>
            <person name="Leather S."/>
            <person name="McDonald S."/>
            <person name="McLean J."/>
            <person name="Mooney P."/>
            <person name="Moule S."/>
            <person name="Mungall K.L."/>
            <person name="Murphy L.D."/>
            <person name="Niblett D."/>
            <person name="Odell C."/>
            <person name="Oliver K."/>
            <person name="O'Neil S."/>
            <person name="Pearson D."/>
            <person name="Quail M.A."/>
            <person name="Rabbinowitsch E."/>
            <person name="Rutherford K.M."/>
            <person name="Rutter S."/>
            <person name="Saunders D."/>
            <person name="Seeger K."/>
            <person name="Sharp S."/>
            <person name="Skelton J."/>
            <person name="Simmonds M.N."/>
            <person name="Squares R."/>
            <person name="Squares S."/>
            <person name="Stevens K."/>
            <person name="Taylor K."/>
            <person name="Taylor R.G."/>
            <person name="Tivey A."/>
            <person name="Walsh S.V."/>
            <person name="Warren T."/>
            <person name="Whitehead S."/>
            <person name="Woodward J.R."/>
            <person name="Volckaert G."/>
            <person name="Aert R."/>
            <person name="Robben J."/>
            <person name="Grymonprez B."/>
            <person name="Weltjens I."/>
            <person name="Vanstreels E."/>
            <person name="Rieger M."/>
            <person name="Schaefer M."/>
            <person name="Mueller-Auer S."/>
            <person name="Gabel C."/>
            <person name="Fuchs M."/>
            <person name="Duesterhoeft A."/>
            <person name="Fritzc C."/>
            <person name="Holzer E."/>
            <person name="Moestl D."/>
            <person name="Hilbert H."/>
            <person name="Borzym K."/>
            <person name="Langer I."/>
            <person name="Beck A."/>
            <person name="Lehrach H."/>
            <person name="Reinhardt R."/>
            <person name="Pohl T.M."/>
            <person name="Eger P."/>
            <person name="Zimmermann W."/>
            <person name="Wedler H."/>
            <person name="Wambutt R."/>
            <person name="Purnelle B."/>
            <person name="Goffeau A."/>
            <person name="Cadieu E."/>
            <person name="Dreano S."/>
            <person name="Gloux S."/>
            <person name="Lelaure V."/>
            <person name="Mottier S."/>
            <person name="Galibert F."/>
            <person name="Aves S.J."/>
            <person name="Xiang Z."/>
            <person name="Hunt C."/>
            <person name="Moore K."/>
            <person name="Hurst S.M."/>
            <person name="Lucas M."/>
            <person name="Rochet M."/>
            <person name="Gaillardin C."/>
            <person name="Tallada V.A."/>
            <person name="Garzon A."/>
            <person name="Thode G."/>
            <person name="Daga R.R."/>
            <person name="Cruzado L."/>
            <person name="Jimenez J."/>
            <person name="Sanchez M."/>
            <person name="del Rey F."/>
            <person name="Benito J."/>
            <person name="Dominguez A."/>
            <person name="Revuelta J.L."/>
            <person name="Moreno S."/>
            <person name="Armstrong J."/>
            <person name="Forsburg S.L."/>
            <person name="Cerutti L."/>
            <person name="Lowe T."/>
            <person name="McCombie W.R."/>
            <person name="Paulsen I."/>
            <person name="Potashkin J."/>
            <person name="Shpakovski G.V."/>
            <person name="Ussery D."/>
            <person name="Barrell B.G."/>
            <person name="Nurse P."/>
        </authorList>
    </citation>
    <scope>NUCLEOTIDE SEQUENCE [LARGE SCALE GENOMIC DNA]</scope>
    <source>
        <strain>972 / ATCC 24843</strain>
    </source>
</reference>
<reference key="4">
    <citation type="journal article" date="2008" name="J. Proteome Res.">
        <title>Phosphoproteome analysis of fission yeast.</title>
        <authorList>
            <person name="Wilson-Grady J.T."/>
            <person name="Villen J."/>
            <person name="Gygi S.P."/>
        </authorList>
    </citation>
    <scope>PHOSPHORYLATION [LARGE SCALE ANALYSIS] AT SER-184 AND TYR-185</scope>
    <scope>IDENTIFICATION BY MASS SPECTROMETRY</scope>
</reference>
<proteinExistence type="evidence at protein level"/>
<dbReference type="EC" id="2.7.11.1"/>
<dbReference type="EMBL" id="D89120">
    <property type="protein sequence ID" value="BAA13782.1"/>
    <property type="status" value="ALT_INIT"/>
    <property type="molecule type" value="mRNA"/>
</dbReference>
<dbReference type="EMBL" id="D89206">
    <property type="protein sequence ID" value="BAA13867.1"/>
    <property type="status" value="ALT_INIT"/>
    <property type="molecule type" value="mRNA"/>
</dbReference>
<dbReference type="EMBL" id="AB004538">
    <property type="protein sequence ID" value="BAA21444.1"/>
    <property type="status" value="ALT_SEQ"/>
    <property type="molecule type" value="Genomic_DNA"/>
</dbReference>
<dbReference type="EMBL" id="CU329671">
    <property type="protein sequence ID" value="CAA17816.1"/>
    <property type="molecule type" value="Genomic_DNA"/>
</dbReference>
<dbReference type="PIR" id="T40746">
    <property type="entry name" value="T40746"/>
</dbReference>
<dbReference type="PIR" id="T43008">
    <property type="entry name" value="T43008"/>
</dbReference>
<dbReference type="RefSeq" id="NP_595564.1">
    <property type="nucleotide sequence ID" value="NM_001021459.2"/>
</dbReference>
<dbReference type="SMR" id="Q9URT9"/>
<dbReference type="BioGRID" id="277747">
    <property type="interactions" value="3"/>
</dbReference>
<dbReference type="FunCoup" id="Q9URT9">
    <property type="interactions" value="397"/>
</dbReference>
<dbReference type="STRING" id="284812.Q9URT9"/>
<dbReference type="iPTMnet" id="Q9URT9"/>
<dbReference type="PaxDb" id="4896-SPBC8D2.01.1"/>
<dbReference type="EnsemblFungi" id="SPBC8D2.01.1">
    <property type="protein sequence ID" value="SPBC8D2.01.1:pep"/>
    <property type="gene ID" value="SPBC8D2.01"/>
</dbReference>
<dbReference type="GeneID" id="2541233"/>
<dbReference type="KEGG" id="spo:2541233"/>
<dbReference type="PomBase" id="SPBC8D2.01">
    <property type="gene designation" value="gsk31"/>
</dbReference>
<dbReference type="VEuPathDB" id="FungiDB:SPBC8D2.01"/>
<dbReference type="eggNOG" id="KOG0658">
    <property type="taxonomic scope" value="Eukaryota"/>
</dbReference>
<dbReference type="HOGENOM" id="CLU_000288_181_20_1"/>
<dbReference type="InParanoid" id="Q9URT9"/>
<dbReference type="OMA" id="HRRIMYN"/>
<dbReference type="PhylomeDB" id="Q9URT9"/>
<dbReference type="Reactome" id="R-SPO-3371453">
    <property type="pathway name" value="Regulation of HSF1-mediated heat shock response"/>
</dbReference>
<dbReference type="PRO" id="PR:Q9URT9"/>
<dbReference type="Proteomes" id="UP000002485">
    <property type="component" value="Chromosome II"/>
</dbReference>
<dbReference type="GO" id="GO:0005737">
    <property type="term" value="C:cytoplasm"/>
    <property type="evidence" value="ECO:0000318"/>
    <property type="project" value="GO_Central"/>
</dbReference>
<dbReference type="GO" id="GO:0005829">
    <property type="term" value="C:cytosol"/>
    <property type="evidence" value="ECO:0007005"/>
    <property type="project" value="PomBase"/>
</dbReference>
<dbReference type="GO" id="GO:0005634">
    <property type="term" value="C:nucleus"/>
    <property type="evidence" value="ECO:0007005"/>
    <property type="project" value="PomBase"/>
</dbReference>
<dbReference type="GO" id="GO:0005524">
    <property type="term" value="F:ATP binding"/>
    <property type="evidence" value="ECO:0007669"/>
    <property type="project" value="UniProtKB-KW"/>
</dbReference>
<dbReference type="GO" id="GO:0106310">
    <property type="term" value="F:protein serine kinase activity"/>
    <property type="evidence" value="ECO:0007669"/>
    <property type="project" value="RHEA"/>
</dbReference>
<dbReference type="GO" id="GO:0004674">
    <property type="term" value="F:protein serine/threonine kinase activity"/>
    <property type="evidence" value="ECO:0000318"/>
    <property type="project" value="GO_Central"/>
</dbReference>
<dbReference type="GO" id="GO:0004712">
    <property type="term" value="F:protein serine/threonine/tyrosine kinase activity"/>
    <property type="evidence" value="ECO:0000318"/>
    <property type="project" value="GO_Central"/>
</dbReference>
<dbReference type="GO" id="GO:0030154">
    <property type="term" value="P:cell differentiation"/>
    <property type="evidence" value="ECO:0000318"/>
    <property type="project" value="GO_Central"/>
</dbReference>
<dbReference type="GO" id="GO:0030163">
    <property type="term" value="P:protein catabolic process"/>
    <property type="evidence" value="ECO:0000266"/>
    <property type="project" value="PomBase"/>
</dbReference>
<dbReference type="GO" id="GO:0007165">
    <property type="term" value="P:signal transduction"/>
    <property type="evidence" value="ECO:0000318"/>
    <property type="project" value="GO_Central"/>
</dbReference>
<dbReference type="GO" id="GO:0032933">
    <property type="term" value="P:SREBP signaling pathway"/>
    <property type="evidence" value="ECO:0000315"/>
    <property type="project" value="PomBase"/>
</dbReference>
<dbReference type="CDD" id="cd14137">
    <property type="entry name" value="STKc_GSK3"/>
    <property type="match status" value="1"/>
</dbReference>
<dbReference type="FunFam" id="1.10.510.10:FF:000082">
    <property type="entry name" value="Shaggy-related protein kinase kappa"/>
    <property type="match status" value="1"/>
</dbReference>
<dbReference type="Gene3D" id="3.30.200.20">
    <property type="entry name" value="Phosphorylase Kinase, domain 1"/>
    <property type="match status" value="1"/>
</dbReference>
<dbReference type="Gene3D" id="1.10.510.10">
    <property type="entry name" value="Transferase(Phosphotransferase) domain 1"/>
    <property type="match status" value="1"/>
</dbReference>
<dbReference type="InterPro" id="IPR050591">
    <property type="entry name" value="GSK-3"/>
</dbReference>
<dbReference type="InterPro" id="IPR011009">
    <property type="entry name" value="Kinase-like_dom_sf"/>
</dbReference>
<dbReference type="InterPro" id="IPR000719">
    <property type="entry name" value="Prot_kinase_dom"/>
</dbReference>
<dbReference type="InterPro" id="IPR017441">
    <property type="entry name" value="Protein_kinase_ATP_BS"/>
</dbReference>
<dbReference type="InterPro" id="IPR008271">
    <property type="entry name" value="Ser/Thr_kinase_AS"/>
</dbReference>
<dbReference type="InterPro" id="IPR039192">
    <property type="entry name" value="STKc_GSK3"/>
</dbReference>
<dbReference type="PANTHER" id="PTHR24057">
    <property type="entry name" value="GLYCOGEN SYNTHASE KINASE-3 ALPHA"/>
    <property type="match status" value="1"/>
</dbReference>
<dbReference type="PANTHER" id="PTHR24057:SF72">
    <property type="entry name" value="PROTEIN KINASE GSK31"/>
    <property type="match status" value="1"/>
</dbReference>
<dbReference type="Pfam" id="PF00069">
    <property type="entry name" value="Pkinase"/>
    <property type="match status" value="1"/>
</dbReference>
<dbReference type="SMART" id="SM00220">
    <property type="entry name" value="S_TKc"/>
    <property type="match status" value="1"/>
</dbReference>
<dbReference type="SUPFAM" id="SSF56112">
    <property type="entry name" value="Protein kinase-like (PK-like)"/>
    <property type="match status" value="1"/>
</dbReference>
<dbReference type="PROSITE" id="PS00107">
    <property type="entry name" value="PROTEIN_KINASE_ATP"/>
    <property type="match status" value="1"/>
</dbReference>
<dbReference type="PROSITE" id="PS50011">
    <property type="entry name" value="PROTEIN_KINASE_DOM"/>
    <property type="match status" value="1"/>
</dbReference>
<dbReference type="PROSITE" id="PS00108">
    <property type="entry name" value="PROTEIN_KINASE_ST"/>
    <property type="match status" value="1"/>
</dbReference>
<gene>
    <name type="primary">gsk31</name>
    <name type="ORF">pi064</name>
    <name type="ORF">SPBC8D2.01</name>
</gene>
<name>GSK31_SCHPO</name>
<protein>
    <recommendedName>
        <fullName>Protein kinase gsk31</fullName>
        <ecNumber>2.7.11.1</ecNumber>
    </recommendedName>
</protein>
<comment type="catalytic activity">
    <reaction>
        <text>L-seryl-[protein] + ATP = O-phospho-L-seryl-[protein] + ADP + H(+)</text>
        <dbReference type="Rhea" id="RHEA:17989"/>
        <dbReference type="Rhea" id="RHEA-COMP:9863"/>
        <dbReference type="Rhea" id="RHEA-COMP:11604"/>
        <dbReference type="ChEBI" id="CHEBI:15378"/>
        <dbReference type="ChEBI" id="CHEBI:29999"/>
        <dbReference type="ChEBI" id="CHEBI:30616"/>
        <dbReference type="ChEBI" id="CHEBI:83421"/>
        <dbReference type="ChEBI" id="CHEBI:456216"/>
        <dbReference type="EC" id="2.7.11.1"/>
    </reaction>
</comment>
<comment type="catalytic activity">
    <reaction>
        <text>L-threonyl-[protein] + ATP = O-phospho-L-threonyl-[protein] + ADP + H(+)</text>
        <dbReference type="Rhea" id="RHEA:46608"/>
        <dbReference type="Rhea" id="RHEA-COMP:11060"/>
        <dbReference type="Rhea" id="RHEA-COMP:11605"/>
        <dbReference type="ChEBI" id="CHEBI:15378"/>
        <dbReference type="ChEBI" id="CHEBI:30013"/>
        <dbReference type="ChEBI" id="CHEBI:30616"/>
        <dbReference type="ChEBI" id="CHEBI:61977"/>
        <dbReference type="ChEBI" id="CHEBI:456216"/>
        <dbReference type="EC" id="2.7.11.1"/>
    </reaction>
</comment>
<comment type="similarity">
    <text evidence="4">Belongs to the protein kinase superfamily. CMGC Ser/Thr protein kinase family. GSK-3 subfamily.</text>
</comment>
<comment type="sequence caution" evidence="4">
    <conflict type="erroneous initiation">
        <sequence resource="EMBL-CDS" id="BAA13782"/>
    </conflict>
    <text>Extended N-terminus.</text>
</comment>
<comment type="sequence caution" evidence="4">
    <conflict type="erroneous initiation">
        <sequence resource="EMBL-CDS" id="BAA13867"/>
    </conflict>
    <text>Extended N-terminus.</text>
</comment>
<comment type="sequence caution" evidence="4">
    <conflict type="erroneous gene model prediction">
        <sequence resource="EMBL-CDS" id="BAA21444"/>
    </conflict>
</comment>
<sequence>MSDDSHLETKVVTDGTTGEKKTISYEPCRVLGSGSFGVVIQAKLVGTPGFIAVKRVLQDKRYKNRELQIMRAISHPNIIKLIAFFHTHNPSKDETHLCLLLEYMPETVFDDMRWYTRRRKSIPNLSIKLYAFQLFRALAYLHSTGVCHRDIKPQNLLVDYKTGILKLCDFGSAKVLVPSEPNVSYICSRYYRAPELVFGATHYTTKIDVWSAACVIAELFIGRPLFPGDSSVEQLVEIIRVLGTPSYHEISVMNPNYVNHSLPNVRPHTLESVMPHNCTKNAMDLLHKMLTYVPSKRISAIEVLTHPFFDELRDPNCMYHCSRDEGTIERHLPPLFNFNLAELSIRPNLNKAILPPHVYESLDVDINNFEPIVVKQADADS</sequence>
<feature type="chain" id="PRO_0000085977" description="Protein kinase gsk31">
    <location>
        <begin position="1"/>
        <end position="381"/>
    </location>
</feature>
<feature type="domain" description="Protein kinase" evidence="1">
    <location>
        <begin position="25"/>
        <end position="309"/>
    </location>
</feature>
<feature type="active site" description="Proton acceptor" evidence="1 2">
    <location>
        <position position="150"/>
    </location>
</feature>
<feature type="binding site" evidence="1">
    <location>
        <begin position="31"/>
        <end position="39"/>
    </location>
    <ligand>
        <name>ATP</name>
        <dbReference type="ChEBI" id="CHEBI:30616"/>
    </ligand>
</feature>
<feature type="binding site" evidence="1">
    <location>
        <position position="54"/>
    </location>
    <ligand>
        <name>ATP</name>
        <dbReference type="ChEBI" id="CHEBI:30616"/>
    </ligand>
</feature>
<feature type="modified residue" description="Phosphoserine" evidence="3">
    <location>
        <position position="184"/>
    </location>
</feature>
<feature type="modified residue" description="Phosphotyrosine" evidence="3">
    <location>
        <position position="185"/>
    </location>
</feature>
<feature type="sequence conflict" description="In Ref. 1; BAA13782." evidence="4" ref="1">
    <original>R</original>
    <variation>P</variation>
    <location>
        <position position="223"/>
    </location>
</feature>
<feature type="sequence conflict" description="In Ref. 1; BAA13782." evidence="4" ref="1">
    <original>S</original>
    <variation>P</variation>
    <location>
        <position position="246"/>
    </location>
</feature>
<feature type="sequence conflict" description="In Ref. 1; BAA13782." evidence="4" ref="1">
    <original>V</original>
    <variation>A</variation>
    <location>
        <position position="252"/>
    </location>
</feature>
<feature type="sequence conflict" description="In Ref. 1; BAA13782." evidence="4" ref="1">
    <original>N</original>
    <variation>T</variation>
    <location>
        <position position="256"/>
    </location>
</feature>
<feature type="sequence conflict" description="In Ref. 1; BAA13782." evidence="4" ref="1">
    <original>N</original>
    <variation>S</variation>
    <location>
        <position position="281"/>
    </location>
</feature>
<accession>Q9URT9</accession>
<accession>O13654</accession>
<accession>P78772</accession>
<accession>P78856</accession>